<proteinExistence type="inferred from homology"/>
<dbReference type="EMBL" id="AL766853">
    <property type="protein sequence ID" value="CAD47416.1"/>
    <property type="molecule type" value="Genomic_DNA"/>
</dbReference>
<dbReference type="RefSeq" id="WP_000068665.1">
    <property type="nucleotide sequence ID" value="NC_004368.1"/>
</dbReference>
<dbReference type="SMR" id="Q8E3K2"/>
<dbReference type="GeneID" id="98393981"/>
<dbReference type="KEGG" id="san:rpsR"/>
<dbReference type="eggNOG" id="COG0238">
    <property type="taxonomic scope" value="Bacteria"/>
</dbReference>
<dbReference type="HOGENOM" id="CLU_148710_2_2_9"/>
<dbReference type="Proteomes" id="UP000000823">
    <property type="component" value="Chromosome"/>
</dbReference>
<dbReference type="GO" id="GO:0022627">
    <property type="term" value="C:cytosolic small ribosomal subunit"/>
    <property type="evidence" value="ECO:0007669"/>
    <property type="project" value="TreeGrafter"/>
</dbReference>
<dbReference type="GO" id="GO:0070181">
    <property type="term" value="F:small ribosomal subunit rRNA binding"/>
    <property type="evidence" value="ECO:0007669"/>
    <property type="project" value="TreeGrafter"/>
</dbReference>
<dbReference type="GO" id="GO:0003735">
    <property type="term" value="F:structural constituent of ribosome"/>
    <property type="evidence" value="ECO:0007669"/>
    <property type="project" value="InterPro"/>
</dbReference>
<dbReference type="GO" id="GO:0006412">
    <property type="term" value="P:translation"/>
    <property type="evidence" value="ECO:0007669"/>
    <property type="project" value="UniProtKB-UniRule"/>
</dbReference>
<dbReference type="FunFam" id="4.10.640.10:FF:000003">
    <property type="entry name" value="30S ribosomal protein S18"/>
    <property type="match status" value="1"/>
</dbReference>
<dbReference type="Gene3D" id="4.10.640.10">
    <property type="entry name" value="Ribosomal protein S18"/>
    <property type="match status" value="1"/>
</dbReference>
<dbReference type="HAMAP" id="MF_00270">
    <property type="entry name" value="Ribosomal_bS18"/>
    <property type="match status" value="1"/>
</dbReference>
<dbReference type="InterPro" id="IPR001648">
    <property type="entry name" value="Ribosomal_bS18"/>
</dbReference>
<dbReference type="InterPro" id="IPR018275">
    <property type="entry name" value="Ribosomal_bS18_CS"/>
</dbReference>
<dbReference type="InterPro" id="IPR036870">
    <property type="entry name" value="Ribosomal_bS18_sf"/>
</dbReference>
<dbReference type="NCBIfam" id="TIGR00165">
    <property type="entry name" value="S18"/>
    <property type="match status" value="1"/>
</dbReference>
<dbReference type="PANTHER" id="PTHR13479">
    <property type="entry name" value="30S RIBOSOMAL PROTEIN S18"/>
    <property type="match status" value="1"/>
</dbReference>
<dbReference type="PANTHER" id="PTHR13479:SF40">
    <property type="entry name" value="SMALL RIBOSOMAL SUBUNIT PROTEIN BS18M"/>
    <property type="match status" value="1"/>
</dbReference>
<dbReference type="Pfam" id="PF01084">
    <property type="entry name" value="Ribosomal_S18"/>
    <property type="match status" value="1"/>
</dbReference>
<dbReference type="PRINTS" id="PR00974">
    <property type="entry name" value="RIBOSOMALS18"/>
</dbReference>
<dbReference type="SUPFAM" id="SSF46911">
    <property type="entry name" value="Ribosomal protein S18"/>
    <property type="match status" value="1"/>
</dbReference>
<dbReference type="PROSITE" id="PS00057">
    <property type="entry name" value="RIBOSOMAL_S18"/>
    <property type="match status" value="1"/>
</dbReference>
<evidence type="ECO:0000255" key="1">
    <source>
        <dbReference type="HAMAP-Rule" id="MF_00270"/>
    </source>
</evidence>
<evidence type="ECO:0000305" key="2"/>
<feature type="chain" id="PRO_0000111232" description="Small ribosomal subunit protein bS18">
    <location>
        <begin position="1"/>
        <end position="79"/>
    </location>
</feature>
<reference key="1">
    <citation type="journal article" date="2002" name="Mol. Microbiol.">
        <title>Genome sequence of Streptococcus agalactiae, a pathogen causing invasive neonatal disease.</title>
        <authorList>
            <person name="Glaser P."/>
            <person name="Rusniok C."/>
            <person name="Buchrieser C."/>
            <person name="Chevalier F."/>
            <person name="Frangeul L."/>
            <person name="Msadek T."/>
            <person name="Zouine M."/>
            <person name="Couve E."/>
            <person name="Lalioui L."/>
            <person name="Poyart C."/>
            <person name="Trieu-Cuot P."/>
            <person name="Kunst F."/>
        </authorList>
    </citation>
    <scope>NUCLEOTIDE SEQUENCE [LARGE SCALE GENOMIC DNA]</scope>
    <source>
        <strain>NEM316</strain>
    </source>
</reference>
<gene>
    <name evidence="1" type="primary">rpsR</name>
    <name type="ordered locus">gbs1757</name>
</gene>
<keyword id="KW-0687">Ribonucleoprotein</keyword>
<keyword id="KW-0689">Ribosomal protein</keyword>
<keyword id="KW-0694">RNA-binding</keyword>
<keyword id="KW-0699">rRNA-binding</keyword>
<comment type="function">
    <text evidence="1">Binds as a heterodimer with protein bS6 to the central domain of the 16S rRNA, where it helps stabilize the platform of the 30S subunit.</text>
</comment>
<comment type="subunit">
    <text evidence="1">Part of the 30S ribosomal subunit. Forms a tight heterodimer with protein bS6.</text>
</comment>
<comment type="similarity">
    <text evidence="1">Belongs to the bacterial ribosomal protein bS18 family.</text>
</comment>
<accession>Q8E3K2</accession>
<sequence length="79" mass="9220">MAQQRRGGFKRRKKVDYIAANKIEYVDYKDTELLSRFVSERGKILPRRVTGTSAKNQRKVTTAIKRARVMALMPYVNED</sequence>
<protein>
    <recommendedName>
        <fullName evidence="1">Small ribosomal subunit protein bS18</fullName>
    </recommendedName>
    <alternativeName>
        <fullName evidence="2">30S ribosomal protein S18</fullName>
    </alternativeName>
</protein>
<organism>
    <name type="scientific">Streptococcus agalactiae serotype III (strain NEM316)</name>
    <dbReference type="NCBI Taxonomy" id="211110"/>
    <lineage>
        <taxon>Bacteria</taxon>
        <taxon>Bacillati</taxon>
        <taxon>Bacillota</taxon>
        <taxon>Bacilli</taxon>
        <taxon>Lactobacillales</taxon>
        <taxon>Streptococcaceae</taxon>
        <taxon>Streptococcus</taxon>
    </lineage>
</organism>
<name>RS18_STRA3</name>